<gene>
    <name type="ordered locus">RP080</name>
</gene>
<organism>
    <name type="scientific">Rickettsia prowazekii (strain Madrid E)</name>
    <dbReference type="NCBI Taxonomy" id="272947"/>
    <lineage>
        <taxon>Bacteria</taxon>
        <taxon>Pseudomonadati</taxon>
        <taxon>Pseudomonadota</taxon>
        <taxon>Alphaproteobacteria</taxon>
        <taxon>Rickettsiales</taxon>
        <taxon>Rickettsiaceae</taxon>
        <taxon>Rickettsieae</taxon>
        <taxon>Rickettsia</taxon>
        <taxon>typhus group</taxon>
    </lineage>
</organism>
<sequence length="50" mass="5815">MFDLSDSVKNAYLQNIFLLLHCSTLHNDCHDICITIKTRYTMIKNKAITI</sequence>
<protein>
    <recommendedName>
        <fullName>Uncharacterized protein RP080</fullName>
    </recommendedName>
</protein>
<keyword id="KW-1185">Reference proteome</keyword>
<feature type="chain" id="PRO_0000101311" description="Uncharacterized protein RP080">
    <location>
        <begin position="1"/>
        <end position="50"/>
    </location>
</feature>
<dbReference type="EMBL" id="AJ235270">
    <property type="protein sequence ID" value="CAA14550.1"/>
    <property type="molecule type" value="Genomic_DNA"/>
</dbReference>
<dbReference type="PIR" id="G71716">
    <property type="entry name" value="G71716"/>
</dbReference>
<dbReference type="EnsemblBacteria" id="CAA14550">
    <property type="protein sequence ID" value="CAA14550"/>
    <property type="gene ID" value="CAA14550"/>
</dbReference>
<dbReference type="KEGG" id="rpr:RP080"/>
<dbReference type="HOGENOM" id="CLU_3122172_0_0_5"/>
<dbReference type="Proteomes" id="UP000002480">
    <property type="component" value="Chromosome"/>
</dbReference>
<name>Y080_RICPR</name>
<accession>Q9ZE67</accession>
<proteinExistence type="predicted"/>
<reference key="1">
    <citation type="journal article" date="1998" name="Nature">
        <title>The genome sequence of Rickettsia prowazekii and the origin of mitochondria.</title>
        <authorList>
            <person name="Andersson S.G.E."/>
            <person name="Zomorodipour A."/>
            <person name="Andersson J.O."/>
            <person name="Sicheritz-Ponten T."/>
            <person name="Alsmark U.C.M."/>
            <person name="Podowski R.M."/>
            <person name="Naeslund A.K."/>
            <person name="Eriksson A.-S."/>
            <person name="Winkler H.H."/>
            <person name="Kurland C.G."/>
        </authorList>
    </citation>
    <scope>NUCLEOTIDE SEQUENCE [LARGE SCALE GENOMIC DNA]</scope>
    <source>
        <strain>Madrid E</strain>
    </source>
</reference>